<protein>
    <recommendedName>
        <fullName>Saccharopine dehydrogenase [NADP(+), L-glutamate-forming]</fullName>
        <ecNumber>1.5.1.10</ecNumber>
    </recommendedName>
    <alternativeName>
        <fullName>Saccharopine reductase</fullName>
    </alternativeName>
</protein>
<name>LYS9_SCHPO</name>
<evidence type="ECO:0000250" key="1">
    <source>
        <dbReference type="UniProtKB" id="P38999"/>
    </source>
</evidence>
<evidence type="ECO:0000250" key="2">
    <source>
        <dbReference type="UniProtKB" id="Q9P4R4"/>
    </source>
</evidence>
<evidence type="ECO:0000255" key="3"/>
<evidence type="ECO:0000269" key="4">
    <source>
    </source>
</evidence>
<evidence type="ECO:0000305" key="5"/>
<evidence type="ECO:0000312" key="6">
    <source>
        <dbReference type="EMBL" id="CAA18292.1"/>
    </source>
</evidence>
<comment type="catalytic activity">
    <reaction>
        <text>L-saccharopine + NADP(+) + H2O = (S)-2-amino-6-oxohexanoate + L-glutamate + NADPH + H(+)</text>
        <dbReference type="Rhea" id="RHEA:10020"/>
        <dbReference type="ChEBI" id="CHEBI:15377"/>
        <dbReference type="ChEBI" id="CHEBI:15378"/>
        <dbReference type="ChEBI" id="CHEBI:29985"/>
        <dbReference type="ChEBI" id="CHEBI:57783"/>
        <dbReference type="ChEBI" id="CHEBI:57951"/>
        <dbReference type="ChEBI" id="CHEBI:58321"/>
        <dbReference type="ChEBI" id="CHEBI:58349"/>
        <dbReference type="EC" id="1.5.1.10"/>
    </reaction>
</comment>
<comment type="pathway">
    <text>Amino-acid biosynthesis; L-lysine biosynthesis via AAA pathway; L-lysine from L-alpha-aminoadipate (fungal route): step 2/3.</text>
</comment>
<comment type="subunit">
    <text evidence="2">Homodimer.</text>
</comment>
<comment type="subcellular location">
    <subcellularLocation>
        <location evidence="4">Cytoplasm</location>
    </subcellularLocation>
</comment>
<comment type="similarity">
    <text evidence="3">Belongs to the saccharopine dehydrogenase family.</text>
</comment>
<feature type="chain" id="PRO_0000316856" description="Saccharopine dehydrogenase [NADP(+), L-glutamate-forming]">
    <location>
        <begin position="1"/>
        <end position="450"/>
    </location>
</feature>
<feature type="binding site" evidence="2">
    <location>
        <begin position="9"/>
        <end position="12"/>
    </location>
    <ligand>
        <name>NADP(+)</name>
        <dbReference type="ChEBI" id="CHEBI:58349"/>
    </ligand>
</feature>
<feature type="binding site" evidence="2">
    <location>
        <begin position="32"/>
        <end position="34"/>
    </location>
    <ligand>
        <name>NADP(+)</name>
        <dbReference type="ChEBI" id="CHEBI:58349"/>
    </ligand>
</feature>
<feature type="binding site" evidence="2">
    <location>
        <begin position="54"/>
        <end position="55"/>
    </location>
    <ligand>
        <name>NADP(+)</name>
        <dbReference type="ChEBI" id="CHEBI:58349"/>
    </ligand>
</feature>
<feature type="binding site" evidence="2">
    <location>
        <position position="75"/>
    </location>
    <ligand>
        <name>NADP(+)</name>
        <dbReference type="ChEBI" id="CHEBI:58349"/>
    </ligand>
</feature>
<feature type="binding site" evidence="2">
    <location>
        <begin position="97"/>
        <end position="98"/>
    </location>
    <ligand>
        <name>NADP(+)</name>
        <dbReference type="ChEBI" id="CHEBI:58349"/>
    </ligand>
</feature>
<feature type="binding site" evidence="2">
    <location>
        <begin position="98"/>
        <end position="99"/>
    </location>
    <ligand>
        <name>L-saccharopine</name>
        <dbReference type="ChEBI" id="CHEBI:57951"/>
    </ligand>
</feature>
<feature type="binding site" evidence="2">
    <location>
        <begin position="124"/>
        <end position="126"/>
    </location>
    <ligand>
        <name>NADP(+)</name>
        <dbReference type="ChEBI" id="CHEBI:58349"/>
    </ligand>
</feature>
<feature type="binding site" evidence="2">
    <location>
        <position position="125"/>
    </location>
    <ligand>
        <name>L-saccharopine</name>
        <dbReference type="ChEBI" id="CHEBI:57951"/>
    </ligand>
</feature>
<feature type="binding site" evidence="2">
    <location>
        <position position="174"/>
    </location>
    <ligand>
        <name>NADP(+)</name>
        <dbReference type="ChEBI" id="CHEBI:58349"/>
    </ligand>
</feature>
<feature type="binding site" evidence="2">
    <location>
        <position position="223"/>
    </location>
    <ligand>
        <name>L-saccharopine</name>
        <dbReference type="ChEBI" id="CHEBI:57951"/>
    </ligand>
</feature>
<feature type="binding site" evidence="2">
    <location>
        <begin position="244"/>
        <end position="246"/>
    </location>
    <ligand>
        <name>L-saccharopine</name>
        <dbReference type="ChEBI" id="CHEBI:57951"/>
    </ligand>
</feature>
<dbReference type="EC" id="1.5.1.10"/>
<dbReference type="EMBL" id="CU329671">
    <property type="protein sequence ID" value="CAA18292.1"/>
    <property type="molecule type" value="Genomic_DNA"/>
</dbReference>
<dbReference type="PIR" id="T40337">
    <property type="entry name" value="T40337"/>
</dbReference>
<dbReference type="RefSeq" id="NP_596411.1">
    <property type="nucleotide sequence ID" value="NM_001022330.2"/>
</dbReference>
<dbReference type="SMR" id="O59711"/>
<dbReference type="BioGRID" id="277424">
    <property type="interactions" value="8"/>
</dbReference>
<dbReference type="FunCoup" id="O59711">
    <property type="interactions" value="456"/>
</dbReference>
<dbReference type="STRING" id="284812.O59711"/>
<dbReference type="iPTMnet" id="O59711"/>
<dbReference type="PaxDb" id="4896-SPBC3B8.03.1"/>
<dbReference type="EnsemblFungi" id="SPBC3B8.03.1">
    <property type="protein sequence ID" value="SPBC3B8.03.1:pep"/>
    <property type="gene ID" value="SPBC3B8.03"/>
</dbReference>
<dbReference type="GeneID" id="2540908"/>
<dbReference type="KEGG" id="spo:2540908"/>
<dbReference type="PomBase" id="SPBC3B8.03">
    <property type="gene designation" value="lys9"/>
</dbReference>
<dbReference type="VEuPathDB" id="FungiDB:SPBC3B8.03"/>
<dbReference type="eggNOG" id="KOG0172">
    <property type="taxonomic scope" value="Eukaryota"/>
</dbReference>
<dbReference type="HOGENOM" id="CLU_016207_3_1_1"/>
<dbReference type="InParanoid" id="O59711"/>
<dbReference type="OMA" id="WNYKFTW"/>
<dbReference type="PhylomeDB" id="O59711"/>
<dbReference type="Reactome" id="R-SPO-71064">
    <property type="pathway name" value="Lysine catabolism"/>
</dbReference>
<dbReference type="UniPathway" id="UPA00033">
    <property type="reaction ID" value="UER00033"/>
</dbReference>
<dbReference type="PRO" id="PR:O59711"/>
<dbReference type="Proteomes" id="UP000002485">
    <property type="component" value="Chromosome II"/>
</dbReference>
<dbReference type="GO" id="GO:0005737">
    <property type="term" value="C:cytoplasm"/>
    <property type="evidence" value="ECO:0000318"/>
    <property type="project" value="GO_Central"/>
</dbReference>
<dbReference type="GO" id="GO:0005829">
    <property type="term" value="C:cytosol"/>
    <property type="evidence" value="ECO:0007005"/>
    <property type="project" value="PomBase"/>
</dbReference>
<dbReference type="GO" id="GO:0004755">
    <property type="term" value="F:saccharopine dehydrogenase (NADP+, L-glutamate-forming) activity"/>
    <property type="evidence" value="ECO:0000266"/>
    <property type="project" value="PomBase"/>
</dbReference>
<dbReference type="GO" id="GO:0004753">
    <property type="term" value="F:saccharopine dehydrogenase activity"/>
    <property type="evidence" value="ECO:0000318"/>
    <property type="project" value="GO_Central"/>
</dbReference>
<dbReference type="GO" id="GO:0009085">
    <property type="term" value="P:lysine biosynthetic process"/>
    <property type="evidence" value="ECO:0000315"/>
    <property type="project" value="PomBase"/>
</dbReference>
<dbReference type="GO" id="GO:0019878">
    <property type="term" value="P:lysine biosynthetic process via aminoadipic acid"/>
    <property type="evidence" value="ECO:0000318"/>
    <property type="project" value="GO_Central"/>
</dbReference>
<dbReference type="FunFam" id="3.30.360.10:FF:000008">
    <property type="entry name" value="Alpha-aminoadipic semialdehyde synthase, mitochondrial"/>
    <property type="match status" value="1"/>
</dbReference>
<dbReference type="FunFam" id="3.40.50.720:FF:000072">
    <property type="entry name" value="Saccharopine dehydrogenase [NADP(+), L-glutamate-forming]"/>
    <property type="match status" value="1"/>
</dbReference>
<dbReference type="FunFam" id="1.10.1870.10:FF:000002">
    <property type="entry name" value="Saccharopine dehydrogenase Lys9"/>
    <property type="match status" value="1"/>
</dbReference>
<dbReference type="Gene3D" id="3.30.360.10">
    <property type="entry name" value="Dihydrodipicolinate Reductase, domain 2"/>
    <property type="match status" value="1"/>
</dbReference>
<dbReference type="Gene3D" id="1.10.1870.10">
    <property type="entry name" value="Domain 3, Saccharopine reductase"/>
    <property type="match status" value="1"/>
</dbReference>
<dbReference type="Gene3D" id="3.40.50.720">
    <property type="entry name" value="NAD(P)-binding Rossmann-like Domain"/>
    <property type="match status" value="1"/>
</dbReference>
<dbReference type="InterPro" id="IPR051168">
    <property type="entry name" value="AASS"/>
</dbReference>
<dbReference type="InterPro" id="IPR036291">
    <property type="entry name" value="NAD(P)-bd_dom_sf"/>
</dbReference>
<dbReference type="InterPro" id="IPR032095">
    <property type="entry name" value="Sacchrp_dh-like_C"/>
</dbReference>
<dbReference type="InterPro" id="IPR005097">
    <property type="entry name" value="Sacchrp_dh_NADP-bd"/>
</dbReference>
<dbReference type="PANTHER" id="PTHR11133:SF22">
    <property type="entry name" value="ALPHA-AMINOADIPIC SEMIALDEHYDE SYNTHASE, MITOCHONDRIAL"/>
    <property type="match status" value="1"/>
</dbReference>
<dbReference type="PANTHER" id="PTHR11133">
    <property type="entry name" value="SACCHAROPINE DEHYDROGENASE"/>
    <property type="match status" value="1"/>
</dbReference>
<dbReference type="Pfam" id="PF16653">
    <property type="entry name" value="Sacchrp_dh_C"/>
    <property type="match status" value="1"/>
</dbReference>
<dbReference type="Pfam" id="PF03435">
    <property type="entry name" value="Sacchrp_dh_NADP"/>
    <property type="match status" value="1"/>
</dbReference>
<dbReference type="SUPFAM" id="SSF55347">
    <property type="entry name" value="Glyceraldehyde-3-phosphate dehydrogenase-like, C-terminal domain"/>
    <property type="match status" value="1"/>
</dbReference>
<dbReference type="SUPFAM" id="SSF51735">
    <property type="entry name" value="NAD(P)-binding Rossmann-fold domains"/>
    <property type="match status" value="1"/>
</dbReference>
<accession>O59711</accession>
<proteinExistence type="inferred from homology"/>
<reference evidence="6" key="1">
    <citation type="journal article" date="2002" name="Nature">
        <title>The genome sequence of Schizosaccharomyces pombe.</title>
        <authorList>
            <person name="Wood V."/>
            <person name="Gwilliam R."/>
            <person name="Rajandream M.A."/>
            <person name="Lyne M.H."/>
            <person name="Lyne R."/>
            <person name="Stewart A."/>
            <person name="Sgouros J.G."/>
            <person name="Peat N."/>
            <person name="Hayles J."/>
            <person name="Baker S.G."/>
            <person name="Basham D."/>
            <person name="Bowman S."/>
            <person name="Brooks K."/>
            <person name="Brown D."/>
            <person name="Brown S."/>
            <person name="Chillingworth T."/>
            <person name="Churcher C.M."/>
            <person name="Collins M."/>
            <person name="Connor R."/>
            <person name="Cronin A."/>
            <person name="Davis P."/>
            <person name="Feltwell T."/>
            <person name="Fraser A."/>
            <person name="Gentles S."/>
            <person name="Goble A."/>
            <person name="Hamlin N."/>
            <person name="Harris D.E."/>
            <person name="Hidalgo J."/>
            <person name="Hodgson G."/>
            <person name="Holroyd S."/>
            <person name="Hornsby T."/>
            <person name="Howarth S."/>
            <person name="Huckle E.J."/>
            <person name="Hunt S."/>
            <person name="Jagels K."/>
            <person name="James K.D."/>
            <person name="Jones L."/>
            <person name="Jones M."/>
            <person name="Leather S."/>
            <person name="McDonald S."/>
            <person name="McLean J."/>
            <person name="Mooney P."/>
            <person name="Moule S."/>
            <person name="Mungall K.L."/>
            <person name="Murphy L.D."/>
            <person name="Niblett D."/>
            <person name="Odell C."/>
            <person name="Oliver K."/>
            <person name="O'Neil S."/>
            <person name="Pearson D."/>
            <person name="Quail M.A."/>
            <person name="Rabbinowitsch E."/>
            <person name="Rutherford K.M."/>
            <person name="Rutter S."/>
            <person name="Saunders D."/>
            <person name="Seeger K."/>
            <person name="Sharp S."/>
            <person name="Skelton J."/>
            <person name="Simmonds M.N."/>
            <person name="Squares R."/>
            <person name="Squares S."/>
            <person name="Stevens K."/>
            <person name="Taylor K."/>
            <person name="Taylor R.G."/>
            <person name="Tivey A."/>
            <person name="Walsh S.V."/>
            <person name="Warren T."/>
            <person name="Whitehead S."/>
            <person name="Woodward J.R."/>
            <person name="Volckaert G."/>
            <person name="Aert R."/>
            <person name="Robben J."/>
            <person name="Grymonprez B."/>
            <person name="Weltjens I."/>
            <person name="Vanstreels E."/>
            <person name="Rieger M."/>
            <person name="Schaefer M."/>
            <person name="Mueller-Auer S."/>
            <person name="Gabel C."/>
            <person name="Fuchs M."/>
            <person name="Duesterhoeft A."/>
            <person name="Fritzc C."/>
            <person name="Holzer E."/>
            <person name="Moestl D."/>
            <person name="Hilbert H."/>
            <person name="Borzym K."/>
            <person name="Langer I."/>
            <person name="Beck A."/>
            <person name="Lehrach H."/>
            <person name="Reinhardt R."/>
            <person name="Pohl T.M."/>
            <person name="Eger P."/>
            <person name="Zimmermann W."/>
            <person name="Wedler H."/>
            <person name="Wambutt R."/>
            <person name="Purnelle B."/>
            <person name="Goffeau A."/>
            <person name="Cadieu E."/>
            <person name="Dreano S."/>
            <person name="Gloux S."/>
            <person name="Lelaure V."/>
            <person name="Mottier S."/>
            <person name="Galibert F."/>
            <person name="Aves S.J."/>
            <person name="Xiang Z."/>
            <person name="Hunt C."/>
            <person name="Moore K."/>
            <person name="Hurst S.M."/>
            <person name="Lucas M."/>
            <person name="Rochet M."/>
            <person name="Gaillardin C."/>
            <person name="Tallada V.A."/>
            <person name="Garzon A."/>
            <person name="Thode G."/>
            <person name="Daga R.R."/>
            <person name="Cruzado L."/>
            <person name="Jimenez J."/>
            <person name="Sanchez M."/>
            <person name="del Rey F."/>
            <person name="Benito J."/>
            <person name="Dominguez A."/>
            <person name="Revuelta J.L."/>
            <person name="Moreno S."/>
            <person name="Armstrong J."/>
            <person name="Forsburg S.L."/>
            <person name="Cerutti L."/>
            <person name="Lowe T."/>
            <person name="McCombie W.R."/>
            <person name="Paulsen I."/>
            <person name="Potashkin J."/>
            <person name="Shpakovski G.V."/>
            <person name="Ussery D."/>
            <person name="Barrell B.G."/>
            <person name="Nurse P."/>
        </authorList>
    </citation>
    <scope>NUCLEOTIDE SEQUENCE [LARGE SCALE GENOMIC DNA]</scope>
    <source>
        <strain>972 / ATCC 24843</strain>
    </source>
</reference>
<reference evidence="5" key="2">
    <citation type="journal article" date="2006" name="Nat. Biotechnol.">
        <title>ORFeome cloning and global analysis of protein localization in the fission yeast Schizosaccharomyces pombe.</title>
        <authorList>
            <person name="Matsuyama A."/>
            <person name="Arai R."/>
            <person name="Yashiroda Y."/>
            <person name="Shirai A."/>
            <person name="Kamata A."/>
            <person name="Sekido S."/>
            <person name="Kobayashi Y."/>
            <person name="Hashimoto A."/>
            <person name="Hamamoto M."/>
            <person name="Hiraoka Y."/>
            <person name="Horinouchi S."/>
            <person name="Yoshida M."/>
        </authorList>
    </citation>
    <scope>SUBCELLULAR LOCATION [LARGE SCALE ANALYSIS]</scope>
</reference>
<organism>
    <name type="scientific">Schizosaccharomyces pombe (strain 972 / ATCC 24843)</name>
    <name type="common">Fission yeast</name>
    <dbReference type="NCBI Taxonomy" id="284812"/>
    <lineage>
        <taxon>Eukaryota</taxon>
        <taxon>Fungi</taxon>
        <taxon>Dikarya</taxon>
        <taxon>Ascomycota</taxon>
        <taxon>Taphrinomycotina</taxon>
        <taxon>Schizosaccharomycetes</taxon>
        <taxon>Schizosaccharomycetales</taxon>
        <taxon>Schizosaccharomycetaceae</taxon>
        <taxon>Schizosaccharomyces</taxon>
    </lineage>
</organism>
<gene>
    <name evidence="1" type="primary">lys9</name>
    <name type="ORF">SPBC3B8.03</name>
</gene>
<keyword id="KW-0028">Amino-acid biosynthesis</keyword>
<keyword id="KW-0963">Cytoplasm</keyword>
<keyword id="KW-0457">Lysine biosynthesis</keyword>
<keyword id="KW-0521">NADP</keyword>
<keyword id="KW-0560">Oxidoreductase</keyword>
<keyword id="KW-1185">Reference proteome</keyword>
<sequence length="450" mass="49938">MPSILLLGSGFVAHPTLEYLSRRKENNITVACRTLSKAEAFINGIPNSKAIALDVNDEAALEKAVSEHDLTISLIPYTYHATVMKAAIKHGKHVCTTSYVNPKMAELEEAAIKAGSICMNEIGVDPGIDHLYAIKTIEEVHKAGGKIKSFLSYCGGLPAPEDSNNPLGYKFSWSSRGVLLALRNSAKFYENGKLVEIDGKDLMETAKPYFIYPGYAFVCYPNRDSTVYQERYQIPEAETIIRGTLRYQGFPEFIHCLVDMGFLDETAQEYLSPEAPALPWKEVTARVIKAESSSEADLIKKISSIHKFKDEDDKKRILNGLKWLGMFSSKPVTPRGNPLDTLCATLEELMQYEEGERDMLILQHKFEVETKEGKRQTRTCTLLDYGVPNGYTSMAKLVGVPCGVATQQILDGVINTPGVLAPNDMKLCGPLIDTLAKEGIRLEEEIIDEE</sequence>